<accession>Q03251</accession>
<accession>A0A178UVJ6</accession>
<accession>B9DFJ8</accession>
<accession>Q94CB0</accession>
<name>RBG8_ARATH</name>
<evidence type="ECO:0000250" key="1"/>
<evidence type="ECO:0000255" key="2">
    <source>
        <dbReference type="PROSITE-ProRule" id="PRU00176"/>
    </source>
</evidence>
<evidence type="ECO:0000256" key="3">
    <source>
        <dbReference type="SAM" id="MobiDB-lite"/>
    </source>
</evidence>
<evidence type="ECO:0000269" key="4">
    <source>
    </source>
</evidence>
<evidence type="ECO:0000269" key="5">
    <source>
    </source>
</evidence>
<evidence type="ECO:0000269" key="6">
    <source>
    </source>
</evidence>
<evidence type="ECO:0000269" key="7">
    <source>
    </source>
</evidence>
<evidence type="ECO:0000269" key="8">
    <source>
    </source>
</evidence>
<evidence type="ECO:0000269" key="9">
    <source>
    </source>
</evidence>
<evidence type="ECO:0000269" key="10">
    <source>
    </source>
</evidence>
<evidence type="ECO:0000269" key="11">
    <source>
    </source>
</evidence>
<evidence type="ECO:0000269" key="12">
    <source>
    </source>
</evidence>
<evidence type="ECO:0000303" key="13">
    <source>
    </source>
</evidence>
<evidence type="ECO:0000303" key="14">
    <source>
    </source>
</evidence>
<evidence type="ECO:0000303" key="15">
    <source>
    </source>
</evidence>
<evidence type="ECO:0000303" key="16">
    <source>
    </source>
</evidence>
<evidence type="ECO:0000303" key="17">
    <source>
    </source>
</evidence>
<evidence type="ECO:0000303" key="18">
    <source>
    </source>
</evidence>
<evidence type="ECO:0000305" key="19"/>
<evidence type="ECO:0000305" key="20">
    <source>
    </source>
</evidence>
<evidence type="ECO:0000312" key="21">
    <source>
        <dbReference type="Araport" id="AT4G39260"/>
    </source>
</evidence>
<evidence type="ECO:0000312" key="22">
    <source>
        <dbReference type="EMBL" id="CAB43641.1"/>
    </source>
</evidence>
<evidence type="ECO:0007744" key="23">
    <source>
    </source>
</evidence>
<feature type="chain" id="PRO_0000081600" description="Glycine-rich RNA-binding protein 8">
    <location>
        <begin position="1"/>
        <end position="169"/>
    </location>
</feature>
<feature type="domain" description="RRM" evidence="2">
    <location>
        <begin position="6"/>
        <end position="84"/>
    </location>
</feature>
<feature type="region of interest" description="Disordered" evidence="3">
    <location>
        <begin position="80"/>
        <end position="99"/>
    </location>
</feature>
<feature type="region of interest" description="Glycine-rich (GR) required for cell-to-cell movement" evidence="20">
    <location>
        <begin position="86"/>
        <end position="168"/>
    </location>
</feature>
<feature type="region of interest" description="Nuclear targeting sequence (M9)">
    <location>
        <begin position="95"/>
        <end position="143"/>
    </location>
</feature>
<feature type="region of interest" description="Disordered" evidence="3">
    <location>
        <begin position="130"/>
        <end position="169"/>
    </location>
</feature>
<feature type="compositionally biased region" description="Gly residues" evidence="3">
    <location>
        <begin position="86"/>
        <end position="99"/>
    </location>
</feature>
<feature type="modified residue" description="ADP-ribosylarginine; by HopU1" evidence="1">
    <location>
        <position position="47"/>
    </location>
</feature>
<feature type="modified residue" description="Phosphoserine" evidence="23">
    <location>
        <position position="103"/>
    </location>
</feature>
<feature type="splice variant" id="VSP_045857" description="In isoform 2." evidence="14">
    <original>IINDRESGRSRGFGF</original>
    <variation>VCYTRDRSPGSSRFR</variation>
    <location>
        <begin position="37"/>
        <end position="51"/>
    </location>
</feature>
<feature type="splice variant" id="VSP_045858" description="In isoform 2." evidence="14">
    <location>
        <begin position="52"/>
        <end position="169"/>
    </location>
</feature>
<feature type="mutagenesis site" description="Impairs RNA-binding and consequently impairs the regulation of its pre-mRNA and its downstream pre-mRNA target RBG7." evidence="7">
    <original>R</original>
    <variation>Q</variation>
    <location>
        <position position="47"/>
    </location>
</feature>
<organism>
    <name type="scientific">Arabidopsis thaliana</name>
    <name type="common">Mouse-ear cress</name>
    <dbReference type="NCBI Taxonomy" id="3702"/>
    <lineage>
        <taxon>Eukaryota</taxon>
        <taxon>Viridiplantae</taxon>
        <taxon>Streptophyta</taxon>
        <taxon>Embryophyta</taxon>
        <taxon>Tracheophyta</taxon>
        <taxon>Spermatophyta</taxon>
        <taxon>Magnoliopsida</taxon>
        <taxon>eudicotyledons</taxon>
        <taxon>Gunneridae</taxon>
        <taxon>Pentapetalae</taxon>
        <taxon>rosids</taxon>
        <taxon>malvids</taxon>
        <taxon>Brassicales</taxon>
        <taxon>Brassicaceae</taxon>
        <taxon>Camelineae</taxon>
        <taxon>Arabidopsis</taxon>
    </lineage>
</organism>
<gene>
    <name evidence="16" type="primary">RBG8</name>
    <name evidence="18" type="synonym">CCR1</name>
    <name evidence="13 15" type="synonym">GR-RBP8</name>
    <name evidence="16" type="synonym">GRP8</name>
    <name evidence="17" type="synonym">SRBP2</name>
    <name evidence="21" type="ordered locus">At4g39260</name>
    <name evidence="22" type="ORF">T22F8.160</name>
</gene>
<sequence length="169" mass="16579">MSEVEYRCFVGGLAWATNDEDLQRTFSQFGDVIDSKIINDRESGRSRGFGFVTFKDEKAMRDAIEEMNGKELDGRVITVNEAQSRGSGGGGGGRGGSGGGYRSGGGGGYSGGGGGGYSGGGGGGYERRSGGYGSGGGGGGRGYGGGGRREGGGYGGGDGGSYGGGGGGW</sequence>
<reference key="1">
    <citation type="journal article" date="1993" name="Plant Mol. Biol.">
        <title>Two cDNAs from Arabidopsis thaliana encode putative RNA binding proteins containing glycine-rich domains.</title>
        <authorList>
            <person name="van Nocker S."/>
            <person name="Vierstra R.D."/>
        </authorList>
    </citation>
    <scope>NUCLEOTIDE SEQUENCE [MRNA] (ISOFORM 1)</scope>
    <source>
        <strain>cv. Columbia</strain>
        <tissue>Leaf</tissue>
    </source>
</reference>
<reference key="2">
    <citation type="journal article" date="1994" name="Plant Physiol.">
        <title>Genes encoding glycine-rich Arabidopsis thaliana proteins with RNA-binding motifs are influenced by cold treatment and an endogenous circadian rhythm.</title>
        <authorList>
            <person name="Carpenter C.D."/>
            <person name="Kreps J.A."/>
            <person name="Simon A.E."/>
        </authorList>
    </citation>
    <scope>NUCLEOTIDE SEQUENCE [MRNA] (ISOFORM 1)</scope>
    <scope>ALTERNATIVE SPLICING</scope>
    <scope>INDUCTION BY COLD AND CIRCADIAN RHYTHM</scope>
    <scope>TISSUE SPECIFICITY</scope>
    <source>
        <strain>cv. Columbia</strain>
    </source>
</reference>
<reference key="3">
    <citation type="journal article" date="2020" name="Mol. Plant">
        <title>A plant SMALL RNA-BINDING PROTEIN 1 family mediates cell-to-cell trafficking of RNAi signals.</title>
        <authorList>
            <person name="Yan Y."/>
            <person name="Ham B.-K."/>
            <person name="Chong Y.H."/>
            <person name="Yeh S.-D."/>
            <person name="Lucas W.J."/>
        </authorList>
    </citation>
    <scope>NUCLEOTIDE SEQUENCE [MRNA] (ISOFORM 1)</scope>
    <scope>FUNCTION</scope>
    <scope>DISRUPTION PHENOTYPE</scope>
    <scope>DOMAIN</scope>
    <scope>SUBUNIT</scope>
    <scope>GENE FAMILY</scope>
    <source>
        <strain>cv. Columbia</strain>
    </source>
</reference>
<reference key="4">
    <citation type="journal article" date="1999" name="Nature">
        <title>Sequence and analysis of chromosome 4 of the plant Arabidopsis thaliana.</title>
        <authorList>
            <person name="Mayer K.F.X."/>
            <person name="Schueller C."/>
            <person name="Wambutt R."/>
            <person name="Murphy G."/>
            <person name="Volckaert G."/>
            <person name="Pohl T."/>
            <person name="Duesterhoeft A."/>
            <person name="Stiekema W."/>
            <person name="Entian K.-D."/>
            <person name="Terryn N."/>
            <person name="Harris B."/>
            <person name="Ansorge W."/>
            <person name="Brandt P."/>
            <person name="Grivell L.A."/>
            <person name="Rieger M."/>
            <person name="Weichselgartner M."/>
            <person name="de Simone V."/>
            <person name="Obermaier B."/>
            <person name="Mache R."/>
            <person name="Mueller M."/>
            <person name="Kreis M."/>
            <person name="Delseny M."/>
            <person name="Puigdomenech P."/>
            <person name="Watson M."/>
            <person name="Schmidtheini T."/>
            <person name="Reichert B."/>
            <person name="Portetelle D."/>
            <person name="Perez-Alonso M."/>
            <person name="Boutry M."/>
            <person name="Bancroft I."/>
            <person name="Vos P."/>
            <person name="Hoheisel J."/>
            <person name="Zimmermann W."/>
            <person name="Wedler H."/>
            <person name="Ridley P."/>
            <person name="Langham S.-A."/>
            <person name="McCullagh B."/>
            <person name="Bilham L."/>
            <person name="Robben J."/>
            <person name="van der Schueren J."/>
            <person name="Grymonprez B."/>
            <person name="Chuang Y.-J."/>
            <person name="Vandenbussche F."/>
            <person name="Braeken M."/>
            <person name="Weltjens I."/>
            <person name="Voet M."/>
            <person name="Bastiaens I."/>
            <person name="Aert R."/>
            <person name="Defoor E."/>
            <person name="Weitzenegger T."/>
            <person name="Bothe G."/>
            <person name="Ramsperger U."/>
            <person name="Hilbert H."/>
            <person name="Braun M."/>
            <person name="Holzer E."/>
            <person name="Brandt A."/>
            <person name="Peters S."/>
            <person name="van Staveren M."/>
            <person name="Dirkse W."/>
            <person name="Mooijman P."/>
            <person name="Klein Lankhorst R."/>
            <person name="Rose M."/>
            <person name="Hauf J."/>
            <person name="Koetter P."/>
            <person name="Berneiser S."/>
            <person name="Hempel S."/>
            <person name="Feldpausch M."/>
            <person name="Lamberth S."/>
            <person name="Van den Daele H."/>
            <person name="De Keyser A."/>
            <person name="Buysshaert C."/>
            <person name="Gielen J."/>
            <person name="Villarroel R."/>
            <person name="De Clercq R."/>
            <person name="van Montagu M."/>
            <person name="Rogers J."/>
            <person name="Cronin A."/>
            <person name="Quail M.A."/>
            <person name="Bray-Allen S."/>
            <person name="Clark L."/>
            <person name="Doggett J."/>
            <person name="Hall S."/>
            <person name="Kay M."/>
            <person name="Lennard N."/>
            <person name="McLay K."/>
            <person name="Mayes R."/>
            <person name="Pettett A."/>
            <person name="Rajandream M.A."/>
            <person name="Lyne M."/>
            <person name="Benes V."/>
            <person name="Rechmann S."/>
            <person name="Borkova D."/>
            <person name="Bloecker H."/>
            <person name="Scharfe M."/>
            <person name="Grimm M."/>
            <person name="Loehnert T.-H."/>
            <person name="Dose S."/>
            <person name="de Haan M."/>
            <person name="Maarse A.C."/>
            <person name="Schaefer M."/>
            <person name="Mueller-Auer S."/>
            <person name="Gabel C."/>
            <person name="Fuchs M."/>
            <person name="Fartmann B."/>
            <person name="Granderath K."/>
            <person name="Dauner D."/>
            <person name="Herzl A."/>
            <person name="Neumann S."/>
            <person name="Argiriou A."/>
            <person name="Vitale D."/>
            <person name="Liguori R."/>
            <person name="Piravandi E."/>
            <person name="Massenet O."/>
            <person name="Quigley F."/>
            <person name="Clabauld G."/>
            <person name="Muendlein A."/>
            <person name="Felber R."/>
            <person name="Schnabl S."/>
            <person name="Hiller R."/>
            <person name="Schmidt W."/>
            <person name="Lecharny A."/>
            <person name="Aubourg S."/>
            <person name="Chefdor F."/>
            <person name="Cooke R."/>
            <person name="Berger C."/>
            <person name="Monfort A."/>
            <person name="Casacuberta E."/>
            <person name="Gibbons T."/>
            <person name="Weber N."/>
            <person name="Vandenbol M."/>
            <person name="Bargues M."/>
            <person name="Terol J."/>
            <person name="Torres A."/>
            <person name="Perez-Perez A."/>
            <person name="Purnelle B."/>
            <person name="Bent E."/>
            <person name="Johnson S."/>
            <person name="Tacon D."/>
            <person name="Jesse T."/>
            <person name="Heijnen L."/>
            <person name="Schwarz S."/>
            <person name="Scholler P."/>
            <person name="Heber S."/>
            <person name="Francs P."/>
            <person name="Bielke C."/>
            <person name="Frishman D."/>
            <person name="Haase D."/>
            <person name="Lemcke K."/>
            <person name="Mewes H.-W."/>
            <person name="Stocker S."/>
            <person name="Zaccaria P."/>
            <person name="Bevan M."/>
            <person name="Wilson R.K."/>
            <person name="de la Bastide M."/>
            <person name="Habermann K."/>
            <person name="Parnell L."/>
            <person name="Dedhia N."/>
            <person name="Gnoj L."/>
            <person name="Schutz K."/>
            <person name="Huang E."/>
            <person name="Spiegel L."/>
            <person name="Sekhon M."/>
            <person name="Murray J."/>
            <person name="Sheet P."/>
            <person name="Cordes M."/>
            <person name="Abu-Threideh J."/>
            <person name="Stoneking T."/>
            <person name="Kalicki J."/>
            <person name="Graves T."/>
            <person name="Harmon G."/>
            <person name="Edwards J."/>
            <person name="Latreille P."/>
            <person name="Courtney L."/>
            <person name="Cloud J."/>
            <person name="Abbott A."/>
            <person name="Scott K."/>
            <person name="Johnson D."/>
            <person name="Minx P."/>
            <person name="Bentley D."/>
            <person name="Fulton B."/>
            <person name="Miller N."/>
            <person name="Greco T."/>
            <person name="Kemp K."/>
            <person name="Kramer J."/>
            <person name="Fulton L."/>
            <person name="Mardis E."/>
            <person name="Dante M."/>
            <person name="Pepin K."/>
            <person name="Hillier L.W."/>
            <person name="Nelson J."/>
            <person name="Spieth J."/>
            <person name="Ryan E."/>
            <person name="Andrews S."/>
            <person name="Geisel C."/>
            <person name="Layman D."/>
            <person name="Du H."/>
            <person name="Ali J."/>
            <person name="Berghoff A."/>
            <person name="Jones K."/>
            <person name="Drone K."/>
            <person name="Cotton M."/>
            <person name="Joshu C."/>
            <person name="Antonoiu B."/>
            <person name="Zidanic M."/>
            <person name="Strong C."/>
            <person name="Sun H."/>
            <person name="Lamar B."/>
            <person name="Yordan C."/>
            <person name="Ma P."/>
            <person name="Zhong J."/>
            <person name="Preston R."/>
            <person name="Vil D."/>
            <person name="Shekher M."/>
            <person name="Matero A."/>
            <person name="Shah R."/>
            <person name="Swaby I.K."/>
            <person name="O'Shaughnessy A."/>
            <person name="Rodriguez M."/>
            <person name="Hoffman J."/>
            <person name="Till S."/>
            <person name="Granat S."/>
            <person name="Shohdy N."/>
            <person name="Hasegawa A."/>
            <person name="Hameed A."/>
            <person name="Lodhi M."/>
            <person name="Johnson A."/>
            <person name="Chen E."/>
            <person name="Marra M.A."/>
            <person name="Martienssen R."/>
            <person name="McCombie W.R."/>
        </authorList>
    </citation>
    <scope>NUCLEOTIDE SEQUENCE [LARGE SCALE GENOMIC DNA]</scope>
    <source>
        <strain>cv. Columbia</strain>
    </source>
</reference>
<reference key="5">
    <citation type="journal article" date="2017" name="Plant J.">
        <title>Araport11: a complete reannotation of the Arabidopsis thaliana reference genome.</title>
        <authorList>
            <person name="Cheng C.Y."/>
            <person name="Krishnakumar V."/>
            <person name="Chan A.P."/>
            <person name="Thibaud-Nissen F."/>
            <person name="Schobel S."/>
            <person name="Town C.D."/>
        </authorList>
    </citation>
    <scope>GENOME REANNOTATION</scope>
    <source>
        <strain>cv. Columbia</strain>
    </source>
</reference>
<reference key="6">
    <citation type="journal article" date="2003" name="Science">
        <title>Empirical analysis of transcriptional activity in the Arabidopsis genome.</title>
        <authorList>
            <person name="Yamada K."/>
            <person name="Lim J."/>
            <person name="Dale J.M."/>
            <person name="Chen H."/>
            <person name="Shinn P."/>
            <person name="Palm C.J."/>
            <person name="Southwick A.M."/>
            <person name="Wu H.C."/>
            <person name="Kim C.J."/>
            <person name="Nguyen M."/>
            <person name="Pham P.K."/>
            <person name="Cheuk R.F."/>
            <person name="Karlin-Newmann G."/>
            <person name="Liu S.X."/>
            <person name="Lam B."/>
            <person name="Sakano H."/>
            <person name="Wu T."/>
            <person name="Yu G."/>
            <person name="Miranda M."/>
            <person name="Quach H.L."/>
            <person name="Tripp M."/>
            <person name="Chang C.H."/>
            <person name="Lee J.M."/>
            <person name="Toriumi M.J."/>
            <person name="Chan M.M."/>
            <person name="Tang C.C."/>
            <person name="Onodera C.S."/>
            <person name="Deng J.M."/>
            <person name="Akiyama K."/>
            <person name="Ansari Y."/>
            <person name="Arakawa T."/>
            <person name="Banh J."/>
            <person name="Banno F."/>
            <person name="Bowser L."/>
            <person name="Brooks S.Y."/>
            <person name="Carninci P."/>
            <person name="Chao Q."/>
            <person name="Choy N."/>
            <person name="Enju A."/>
            <person name="Goldsmith A.D."/>
            <person name="Gurjal M."/>
            <person name="Hansen N.F."/>
            <person name="Hayashizaki Y."/>
            <person name="Johnson-Hopson C."/>
            <person name="Hsuan V.W."/>
            <person name="Iida K."/>
            <person name="Karnes M."/>
            <person name="Khan S."/>
            <person name="Koesema E."/>
            <person name="Ishida J."/>
            <person name="Jiang P.X."/>
            <person name="Jones T."/>
            <person name="Kawai J."/>
            <person name="Kamiya A."/>
            <person name="Meyers C."/>
            <person name="Nakajima M."/>
            <person name="Narusaka M."/>
            <person name="Seki M."/>
            <person name="Sakurai T."/>
            <person name="Satou M."/>
            <person name="Tamse R."/>
            <person name="Vaysberg M."/>
            <person name="Wallender E.K."/>
            <person name="Wong C."/>
            <person name="Yamamura Y."/>
            <person name="Yuan S."/>
            <person name="Shinozaki K."/>
            <person name="Davis R.W."/>
            <person name="Theologis A."/>
            <person name="Ecker J.R."/>
        </authorList>
    </citation>
    <scope>NUCLEOTIDE SEQUENCE [LARGE SCALE MRNA] (ISOFORM 2)</scope>
    <source>
        <strain>cv. Columbia</strain>
    </source>
</reference>
<reference key="7">
    <citation type="journal article" date="2009" name="DNA Res.">
        <title>Analysis of multiple occurrences of alternative splicing events in Arabidopsis thaliana using novel sequenced full-length cDNAs.</title>
        <authorList>
            <person name="Iida K."/>
            <person name="Fukami-Kobayashi K."/>
            <person name="Toyoda A."/>
            <person name="Sakaki Y."/>
            <person name="Kobayashi M."/>
            <person name="Seki M."/>
            <person name="Shinozaki K."/>
        </authorList>
    </citation>
    <scope>NUCLEOTIDE SEQUENCE [LARGE SCALE MRNA] (ISOFORM 1)</scope>
    <source>
        <strain>cv. Columbia</strain>
        <tissue>Rosette leaf</tissue>
    </source>
</reference>
<reference key="8">
    <citation type="journal article" date="2002" name="Nucleic Acids Res.">
        <title>Genome analysis: RNA recognition motif (RRM) and K homology (KH) domain RNA-binding proteins from the flowering plant Arabidopsis thaliana.</title>
        <authorList>
            <person name="Lorkovic Z.J."/>
            <person name="Barta A."/>
        </authorList>
    </citation>
    <scope>GENE FAMILY</scope>
</reference>
<reference key="9">
    <citation type="journal article" date="2003" name="Plant J.">
        <title>The circadian clock regulated RNA-binding protein AtGRP7 autoregulates its expression by influencing alternative splicing of its own pre-mRNA.</title>
        <authorList>
            <person name="Staiger D."/>
            <person name="Zecca L."/>
            <person name="Wieczorek Kirk D.A."/>
            <person name="Apel K."/>
            <person name="Eckstein L."/>
        </authorList>
    </citation>
    <scope>ALTERNATIVE SPLICING</scope>
</reference>
<reference key="10">
    <citation type="journal article" date="2003" name="Plant Mol. Biol.">
        <title>Arabidopsis transportin1 is the nuclear import receptor for the circadian clock-regulated RNA-binding protein AtGRP7.</title>
        <authorList>
            <person name="Ziemienowicz A."/>
            <person name="Haasen D."/>
            <person name="Staiger D."/>
            <person name="Merkle T."/>
        </authorList>
    </citation>
    <scope>INTERACTION WITH TRN1</scope>
    <scope>NUCLEAR LOCALIZATION SIGNAL</scope>
</reference>
<reference key="11">
    <citation type="journal article" date="2005" name="J. Exp. Bot.">
        <title>Characterization of transgenic Arabidopsis plants overexpressing GR-RBP4 under high salinity, dehydration, or cold stress.</title>
        <authorList>
            <person name="Kwak K.J."/>
            <person name="Kim Y.O."/>
            <person name="Kang H."/>
        </authorList>
    </citation>
    <scope>INDUCTION BY COLD</scope>
</reference>
<reference key="12">
    <citation type="journal article" date="2007" name="Nature">
        <title>A type III effector ADP-ribosylates RNA-binding proteins and quells plant immunity.</title>
        <authorList>
            <person name="Fu Z.Q."/>
            <person name="Guo M."/>
            <person name="Jeong B.R."/>
            <person name="Tian F."/>
            <person name="Elthon T.E."/>
            <person name="Cerny R.L."/>
            <person name="Staiger D."/>
            <person name="Alfano J.R."/>
        </authorList>
    </citation>
    <scope>ADP-RIBOSYLATION</scope>
    <scope>IDENTIFICATION BY MASS SPECTROMETRY</scope>
    <scope>SUBCELLULAR LOCATION</scope>
</reference>
<reference key="13">
    <citation type="journal article" date="2007" name="Plant Cell">
        <title>Proteome analysis of Arabidopsis leaf peroxisomes reveals novel targeting peptides, metabolic pathways, and defense mechanisms.</title>
        <authorList>
            <person name="Reumann S."/>
            <person name="Babujee L."/>
            <person name="Ma C."/>
            <person name="Wienkoop S."/>
            <person name="Siemsen T."/>
            <person name="Antonicelli G.E."/>
            <person name="Rasche N."/>
            <person name="Lueder F."/>
            <person name="Weckwerth W."/>
            <person name="Jahn O."/>
        </authorList>
    </citation>
    <scope>IDENTIFICATION BY MASS SPECTROMETRY</scope>
</reference>
<reference key="14">
    <citation type="journal article" date="2008" name="Nucleic Acids Res.">
        <title>Reciprocal regulation of glycine-rich RNA-binding proteins via an interlocked feedback loop coupling alternative splicing to nonsense-mediated decay in Arabidopsis.</title>
        <authorList>
            <person name="Schoening J.C."/>
            <person name="Streitner C."/>
            <person name="Meyer I.M."/>
            <person name="Gao Y."/>
            <person name="Staiger D."/>
        </authorList>
    </citation>
    <scope>FUNCTION</scope>
    <scope>ALTERNATIVE SPLICING</scope>
    <scope>MUTAGENESIS OF ARG-47</scope>
    <scope>INDUCTION BY COLD</scope>
</reference>
<reference key="15">
    <citation type="journal article" date="2009" name="Biophys. J.">
        <title>Quantitative analysis of single-molecule RNA-protein interaction.</title>
        <authorList>
            <person name="Fuhrmann A."/>
            <person name="Schoening J.C."/>
            <person name="Anselmetti D."/>
            <person name="Staiger D."/>
            <person name="Ros R."/>
        </authorList>
    </citation>
    <scope>RNA-BINDING</scope>
    <scope>FUNCTION</scope>
</reference>
<reference key="16">
    <citation type="journal article" date="2009" name="J. Proteomics">
        <title>Phosphoproteomic analysis of nuclei-enriched fractions from Arabidopsis thaliana.</title>
        <authorList>
            <person name="Jones A.M.E."/>
            <person name="MacLean D."/>
            <person name="Studholme D.J."/>
            <person name="Serna-Sanz A."/>
            <person name="Andreasson E."/>
            <person name="Rathjen J.P."/>
            <person name="Peck S.C."/>
        </authorList>
    </citation>
    <scope>PHOSPHORYLATION [LARGE SCALE ANALYSIS] AT SER-103</scope>
    <scope>IDENTIFICATION BY MASS SPECTROMETRY [LARGE SCALE ANALYSIS]</scope>
    <source>
        <strain>cv. Columbia</strain>
    </source>
</reference>
<reference key="17">
    <citation type="journal article" date="2010" name="Mol. Biol. Rep.">
        <title>A proteomic analysis of oligo(dT)-bound mRNP containing oxidative stress-induced Arabidopsis thaliana RNA-binding proteins ATGRP7 and ATGRP8.</title>
        <authorList>
            <person name="Schmidt F."/>
            <person name="Marnef A."/>
            <person name="Cheung M.K."/>
            <person name="Wilson I."/>
            <person name="Hancock J."/>
            <person name="Staiger D."/>
            <person name="Ladomery M."/>
        </authorList>
    </citation>
    <scope>IDENTIFICATION BY MASS SPECTROMETRY</scope>
    <scope>INDUCTION BY HYDROGEN PEROXIDE</scope>
    <scope>RNA-BINDING</scope>
</reference>
<reference key="18">
    <citation type="journal article" date="2010" name="Plant Signal. Behav.">
        <title>Functional diversity of the plant glycine-rich proteins superfamily.</title>
        <authorList>
            <person name="Mangeon A."/>
            <person name="Junqueira R.M."/>
            <person name="Sachetto-Martins G."/>
        </authorList>
    </citation>
    <scope>NOMENCLATURE</scope>
</reference>
<reference key="19">
    <citation type="journal article" date="2012" name="Nucleic Acids Res.">
        <title>An hnRNP-like RNA-binding protein affects alternative splicing by in vivo interaction with transcripts in Arabidopsis thaliana.</title>
        <authorList>
            <person name="Streitner C."/>
            <person name="Koester T."/>
            <person name="Simpson C.G."/>
            <person name="Shaw P."/>
            <person name="Danisman S."/>
            <person name="Brown J.W."/>
            <person name="Staiger D."/>
        </authorList>
    </citation>
    <scope>FUNCTION</scope>
</reference>
<proteinExistence type="evidence at protein level"/>
<keyword id="KW-0013">ADP-ribosylation</keyword>
<keyword id="KW-0025">Alternative splicing</keyword>
<keyword id="KW-0963">Cytoplasm</keyword>
<keyword id="KW-0507">mRNA processing</keyword>
<keyword id="KW-0508">mRNA splicing</keyword>
<keyword id="KW-0539">Nucleus</keyword>
<keyword id="KW-0597">Phosphoprotein</keyword>
<keyword id="KW-1185">Reference proteome</keyword>
<keyword id="KW-0694">RNA-binding</keyword>
<keyword id="KW-0964">Secreted</keyword>
<comment type="function">
    <text evidence="7 8 10 11">Plays a role in RNA transcription or processing during stress. Binds RNAs and DNAs sequence with a preference to single-stranded nucleic acids. Involved in mRNA alternative splicing of numerous targets by modulating splice site selection. Negatively regulates the circadian oscillations of its own transcript as well as RBG7 transcript. Forms an interlocked post-transcriptional negative feedback loop with the RBG7 autoregulatory circuit. Both proteins negatively autoregulate and reciprocally crossregulate by binding to their pre-mRNAs and promoting unproductive splicing coupled to degradation via the NMD pathway. Target of the Pseudomonas syringae type III effector HopU1. Mediates cell-to-cell trafficking of RNA interference (RNAi) signals (small RNAs (sRNA), e.g. small interfering RNA (siRNA) and microRNA (miRNA)) which regulate growth and development, as well as responses to environmental inputs, including pathogen attack; can compromise zucchini yellow mosaic virus (ZYMV) and tobacco rattle virus (TRV) infections at the early stage (PubMed:31812689).</text>
</comment>
<comment type="subunit">
    <text evidence="4 11">Interacts with TRN1 (PubMed:14756317). Binds to small phloem-mobile single-stranded RNAs (ss-sRNA, e.g. small interfering RNA (siRNA) and microRNA (miRNA)) in the phloeme exudate, including viral-derived sRNA (vsiRNA) (PubMed:31812689).</text>
</comment>
<comment type="subcellular location">
    <subcellularLocation>
        <location evidence="6">Cytoplasm</location>
    </subcellularLocation>
    <subcellularLocation>
        <location evidence="1">Nucleus</location>
    </subcellularLocation>
    <subcellularLocation>
        <location evidence="11">Secreted</location>
    </subcellularLocation>
    <text evidence="1 11">Shuttling between nucleus and cytoplasm. Relocalization from the cytoplasm into the nucleus is mediated by TRN1 (By similarity). Observed in the phloem translocation stream (PubMed:31812689).</text>
</comment>
<comment type="alternative products">
    <event type="alternative splicing"/>
    <isoform>
        <id>Q03251-1</id>
        <name>1</name>
        <sequence type="displayed"/>
    </isoform>
    <isoform>
        <id>Q03251-2</id>
        <name>2</name>
        <sequence type="described" ref="VSP_045857 VSP_045858"/>
    </isoform>
</comment>
<comment type="tissue specificity">
    <text evidence="12">Ubiquitous.</text>
</comment>
<comment type="induction">
    <text evidence="5 7 9 12">Up-regulated by cold stress. Circadian regulation. Induced by hydrogen peroxide (at the protein level).</text>
</comment>
<comment type="domain">
    <text evidence="11">The glycine-rich (GR) domain is necessary and sufficient for cell-to-cell movement and to interefere with zucchini yellow mosaic virus (ZYMV) infection.</text>
</comment>
<comment type="PTM">
    <text evidence="6">ADP-ribosylated by the Pseudomonas syringae type III effector HopU1. ADP-ribosylation reduces the ability of the protein to bind RNA.</text>
</comment>
<comment type="disruption phenotype">
    <text evidence="11">The triple mutant srbp1 srbp2 srbp3 is more susceptible to tobacco rattle virus (TRV).</text>
</comment>
<comment type="miscellaneous">
    <molecule>Isoform 2</molecule>
    <text evidence="19">May be due to a competing donor splice site.</text>
</comment>
<comment type="similarity">
    <text evidence="19">Belongs to the GR-RBP family.</text>
</comment>
<comment type="sequence caution" evidence="19">
    <conflict type="miscellaneous discrepancy">
        <sequence resource="EMBL-CDS" id="AAK59502"/>
    </conflict>
    <text>Wrong choice of frame.</text>
</comment>
<dbReference type="EMBL" id="Z14988">
    <property type="protein sequence ID" value="CAA78712.1"/>
    <property type="molecule type" value="mRNA"/>
</dbReference>
<dbReference type="EMBL" id="L00649">
    <property type="protein sequence ID" value="AAA32854.1"/>
    <property type="molecule type" value="mRNA"/>
</dbReference>
<dbReference type="EMBL" id="L04171">
    <property type="protein sequence ID" value="AAA20201.1"/>
    <property type="molecule type" value="mRNA"/>
</dbReference>
<dbReference type="EMBL" id="MN064664">
    <property type="protein sequence ID" value="QGZ19399.1"/>
    <property type="molecule type" value="mRNA"/>
</dbReference>
<dbReference type="EMBL" id="AL050351">
    <property type="protein sequence ID" value="CAB43641.1"/>
    <property type="molecule type" value="Genomic_DNA"/>
</dbReference>
<dbReference type="EMBL" id="AL161594">
    <property type="protein sequence ID" value="CAB80589.1"/>
    <property type="molecule type" value="Genomic_DNA"/>
</dbReference>
<dbReference type="EMBL" id="CP002687">
    <property type="protein sequence ID" value="AEE87044.1"/>
    <property type="molecule type" value="Genomic_DNA"/>
</dbReference>
<dbReference type="EMBL" id="AY034997">
    <property type="protein sequence ID" value="AAK59502.1"/>
    <property type="status" value="ALT_SEQ"/>
    <property type="molecule type" value="mRNA"/>
</dbReference>
<dbReference type="EMBL" id="AY063005">
    <property type="protein sequence ID" value="AAL34179.1"/>
    <property type="molecule type" value="mRNA"/>
</dbReference>
<dbReference type="EMBL" id="AK316798">
    <property type="protein sequence ID" value="BAH19515.1"/>
    <property type="molecule type" value="mRNA"/>
</dbReference>
<dbReference type="PIR" id="S30148">
    <property type="entry name" value="S30148"/>
</dbReference>
<dbReference type="RefSeq" id="NP_195637.1">
    <molecule id="Q03251-1"/>
    <property type="nucleotide sequence ID" value="NM_120087.4"/>
</dbReference>
<dbReference type="SMR" id="Q03251"/>
<dbReference type="BioGRID" id="15362">
    <property type="interactions" value="5"/>
</dbReference>
<dbReference type="FunCoup" id="Q03251">
    <property type="interactions" value="2391"/>
</dbReference>
<dbReference type="STRING" id="3702.Q03251"/>
<dbReference type="iPTMnet" id="Q03251"/>
<dbReference type="MetOSite" id="Q03251"/>
<dbReference type="PaxDb" id="3702-AT4G39260.1"/>
<dbReference type="ProteomicsDB" id="236509">
    <molecule id="Q03251-1"/>
</dbReference>
<dbReference type="EnsemblPlants" id="AT4G39260.1">
    <molecule id="Q03251-1"/>
    <property type="protein sequence ID" value="AT4G39260.1"/>
    <property type="gene ID" value="AT4G39260"/>
</dbReference>
<dbReference type="GeneID" id="830082"/>
<dbReference type="Gramene" id="AT4G39260.1">
    <molecule id="Q03251-1"/>
    <property type="protein sequence ID" value="AT4G39260.1"/>
    <property type="gene ID" value="AT4G39260"/>
</dbReference>
<dbReference type="KEGG" id="ath:AT4G39260"/>
<dbReference type="Araport" id="AT4G39260"/>
<dbReference type="TAIR" id="AT4G39260">
    <property type="gene designation" value="RBGA6"/>
</dbReference>
<dbReference type="eggNOG" id="KOG0118">
    <property type="taxonomic scope" value="Eukaryota"/>
</dbReference>
<dbReference type="HOGENOM" id="CLU_012062_28_1_1"/>
<dbReference type="InParanoid" id="Q03251"/>
<dbReference type="OrthoDB" id="439808at2759"/>
<dbReference type="CD-CODE" id="4299E36E">
    <property type="entry name" value="Nucleolus"/>
</dbReference>
<dbReference type="PRO" id="PR:Q03251"/>
<dbReference type="Proteomes" id="UP000006548">
    <property type="component" value="Chromosome 4"/>
</dbReference>
<dbReference type="ExpressionAtlas" id="Q03251">
    <property type="expression patterns" value="baseline and differential"/>
</dbReference>
<dbReference type="GO" id="GO:0005829">
    <property type="term" value="C:cytosol"/>
    <property type="evidence" value="ECO:0007005"/>
    <property type="project" value="TAIR"/>
</dbReference>
<dbReference type="GO" id="GO:0005615">
    <property type="term" value="C:extracellular space"/>
    <property type="evidence" value="ECO:0000314"/>
    <property type="project" value="UniProtKB"/>
</dbReference>
<dbReference type="GO" id="GO:0005794">
    <property type="term" value="C:Golgi apparatus"/>
    <property type="evidence" value="ECO:0007005"/>
    <property type="project" value="TAIR"/>
</dbReference>
<dbReference type="GO" id="GO:0005730">
    <property type="term" value="C:nucleolus"/>
    <property type="evidence" value="ECO:0007005"/>
    <property type="project" value="TAIR"/>
</dbReference>
<dbReference type="GO" id="GO:0005777">
    <property type="term" value="C:peroxisome"/>
    <property type="evidence" value="ECO:0007005"/>
    <property type="project" value="TAIR"/>
</dbReference>
<dbReference type="GO" id="GO:0009505">
    <property type="term" value="C:plant-type cell wall"/>
    <property type="evidence" value="ECO:0007005"/>
    <property type="project" value="TAIR"/>
</dbReference>
<dbReference type="GO" id="GO:0005886">
    <property type="term" value="C:plasma membrane"/>
    <property type="evidence" value="ECO:0007005"/>
    <property type="project" value="TAIR"/>
</dbReference>
<dbReference type="GO" id="GO:0009506">
    <property type="term" value="C:plasmodesma"/>
    <property type="evidence" value="ECO:0007005"/>
    <property type="project" value="TAIR"/>
</dbReference>
<dbReference type="GO" id="GO:0035198">
    <property type="term" value="F:miRNA binding"/>
    <property type="evidence" value="ECO:0000314"/>
    <property type="project" value="UniProtKB"/>
</dbReference>
<dbReference type="GO" id="GO:0003729">
    <property type="term" value="F:mRNA binding"/>
    <property type="evidence" value="ECO:0000314"/>
    <property type="project" value="TAIR"/>
</dbReference>
<dbReference type="GO" id="GO:0003727">
    <property type="term" value="F:single-stranded RNA binding"/>
    <property type="evidence" value="ECO:0000314"/>
    <property type="project" value="UniProtKB"/>
</dbReference>
<dbReference type="GO" id="GO:0035197">
    <property type="term" value="F:siRNA binding"/>
    <property type="evidence" value="ECO:0000314"/>
    <property type="project" value="UniProtKB"/>
</dbReference>
<dbReference type="GO" id="GO:0000380">
    <property type="term" value="P:alternative mRNA splicing, via spliceosome"/>
    <property type="evidence" value="ECO:0000315"/>
    <property type="project" value="TAIR"/>
</dbReference>
<dbReference type="GO" id="GO:0006858">
    <property type="term" value="P:extracellular transport"/>
    <property type="evidence" value="ECO:0000314"/>
    <property type="project" value="UniProtKB"/>
</dbReference>
<dbReference type="GO" id="GO:0045087">
    <property type="term" value="P:innate immune response"/>
    <property type="evidence" value="ECO:0000314"/>
    <property type="project" value="TAIR"/>
</dbReference>
<dbReference type="GO" id="GO:1990428">
    <property type="term" value="P:miRNA transport"/>
    <property type="evidence" value="ECO:0000314"/>
    <property type="project" value="UniProtKB"/>
</dbReference>
<dbReference type="GO" id="GO:0050688">
    <property type="term" value="P:regulation of defense response to virus"/>
    <property type="evidence" value="ECO:0000314"/>
    <property type="project" value="UniProtKB"/>
</dbReference>
<dbReference type="GO" id="GO:0009409">
    <property type="term" value="P:response to cold"/>
    <property type="evidence" value="ECO:0000270"/>
    <property type="project" value="UniProtKB"/>
</dbReference>
<dbReference type="GO" id="GO:0010043">
    <property type="term" value="P:response to zinc ion"/>
    <property type="evidence" value="ECO:0000270"/>
    <property type="project" value="TAIR"/>
</dbReference>
<dbReference type="GO" id="GO:0050658">
    <property type="term" value="P:RNA transport"/>
    <property type="evidence" value="ECO:0000314"/>
    <property type="project" value="UniProtKB"/>
</dbReference>
<dbReference type="CDD" id="cd21608">
    <property type="entry name" value="RRM2_NsCP33_like"/>
    <property type="match status" value="1"/>
</dbReference>
<dbReference type="FunFam" id="3.30.70.330:FF:001313">
    <property type="entry name" value="Glycine-rich RNA-binding protein 7"/>
    <property type="match status" value="1"/>
</dbReference>
<dbReference type="Gene3D" id="3.30.70.330">
    <property type="match status" value="1"/>
</dbReference>
<dbReference type="InterPro" id="IPR012677">
    <property type="entry name" value="Nucleotide-bd_a/b_plait_sf"/>
</dbReference>
<dbReference type="InterPro" id="IPR035979">
    <property type="entry name" value="RBD_domain_sf"/>
</dbReference>
<dbReference type="InterPro" id="IPR048289">
    <property type="entry name" value="RRM2_NsCP33-like"/>
</dbReference>
<dbReference type="InterPro" id="IPR000504">
    <property type="entry name" value="RRM_dom"/>
</dbReference>
<dbReference type="InterPro" id="IPR052462">
    <property type="entry name" value="SLIRP/GR-RBP-like"/>
</dbReference>
<dbReference type="PANTHER" id="PTHR48027">
    <property type="entry name" value="HETEROGENEOUS NUCLEAR RIBONUCLEOPROTEIN 87F-RELATED"/>
    <property type="match status" value="1"/>
</dbReference>
<dbReference type="Pfam" id="PF00076">
    <property type="entry name" value="RRM_1"/>
    <property type="match status" value="1"/>
</dbReference>
<dbReference type="SMART" id="SM00360">
    <property type="entry name" value="RRM"/>
    <property type="match status" value="1"/>
</dbReference>
<dbReference type="SUPFAM" id="SSF54928">
    <property type="entry name" value="RNA-binding domain, RBD"/>
    <property type="match status" value="1"/>
</dbReference>
<dbReference type="PROSITE" id="PS50102">
    <property type="entry name" value="RRM"/>
    <property type="match status" value="1"/>
</dbReference>
<protein>
    <recommendedName>
        <fullName evidence="13 15">Glycine-rich RNA-binding protein 8</fullName>
        <shortName evidence="13 15">AtGR-RBP8</shortName>
    </recommendedName>
    <alternativeName>
        <fullName evidence="16">AtRBG8</fullName>
    </alternativeName>
    <alternativeName>
        <fullName evidence="16">Glycine-rich protein 8</fullName>
        <shortName evidence="16">AtGRP8</shortName>
    </alternativeName>
    <alternativeName>
        <fullName evidence="18">Protein COLD, CIRCADIAN RHYTHM, AND RNA BINDING 1</fullName>
        <shortName evidence="18">Protein CCR1</shortName>
    </alternativeName>
    <alternativeName>
        <fullName evidence="17">Small RNA binding protein 2</fullName>
        <shortName evidence="17">AtSRBP2</shortName>
    </alternativeName>
</protein>